<evidence type="ECO:0000255" key="1">
    <source>
        <dbReference type="HAMAP-Rule" id="MF_00531"/>
    </source>
</evidence>
<evidence type="ECO:0000256" key="2">
    <source>
        <dbReference type="SAM" id="MobiDB-lite"/>
    </source>
</evidence>
<evidence type="ECO:0000305" key="3"/>
<accession>B4UBA3</accession>
<proteinExistence type="inferred from homology"/>
<feature type="chain" id="PRO_1000127923" description="Small ribosomal subunit protein uS19">
    <location>
        <begin position="1"/>
        <end position="98"/>
    </location>
</feature>
<feature type="region of interest" description="Disordered" evidence="2">
    <location>
        <begin position="1"/>
        <end position="30"/>
    </location>
</feature>
<feature type="region of interest" description="Disordered" evidence="2">
    <location>
        <begin position="78"/>
        <end position="98"/>
    </location>
</feature>
<feature type="compositionally biased region" description="Basic and acidic residues" evidence="2">
    <location>
        <begin position="9"/>
        <end position="24"/>
    </location>
</feature>
<dbReference type="EMBL" id="CP001131">
    <property type="protein sequence ID" value="ACG73165.1"/>
    <property type="molecule type" value="Genomic_DNA"/>
</dbReference>
<dbReference type="RefSeq" id="WP_012525977.1">
    <property type="nucleotide sequence ID" value="NC_011145.1"/>
</dbReference>
<dbReference type="SMR" id="B4UBA3"/>
<dbReference type="KEGG" id="ank:AnaeK_1937"/>
<dbReference type="HOGENOM" id="CLU_144911_0_1_7"/>
<dbReference type="OrthoDB" id="9797833at2"/>
<dbReference type="Proteomes" id="UP000001871">
    <property type="component" value="Chromosome"/>
</dbReference>
<dbReference type="GO" id="GO:0005737">
    <property type="term" value="C:cytoplasm"/>
    <property type="evidence" value="ECO:0007669"/>
    <property type="project" value="UniProtKB-ARBA"/>
</dbReference>
<dbReference type="GO" id="GO:0015935">
    <property type="term" value="C:small ribosomal subunit"/>
    <property type="evidence" value="ECO:0007669"/>
    <property type="project" value="InterPro"/>
</dbReference>
<dbReference type="GO" id="GO:0019843">
    <property type="term" value="F:rRNA binding"/>
    <property type="evidence" value="ECO:0007669"/>
    <property type="project" value="UniProtKB-UniRule"/>
</dbReference>
<dbReference type="GO" id="GO:0003735">
    <property type="term" value="F:structural constituent of ribosome"/>
    <property type="evidence" value="ECO:0007669"/>
    <property type="project" value="InterPro"/>
</dbReference>
<dbReference type="GO" id="GO:0000028">
    <property type="term" value="P:ribosomal small subunit assembly"/>
    <property type="evidence" value="ECO:0007669"/>
    <property type="project" value="TreeGrafter"/>
</dbReference>
<dbReference type="GO" id="GO:0006412">
    <property type="term" value="P:translation"/>
    <property type="evidence" value="ECO:0007669"/>
    <property type="project" value="UniProtKB-UniRule"/>
</dbReference>
<dbReference type="FunFam" id="3.30.860.10:FF:000001">
    <property type="entry name" value="30S ribosomal protein S19"/>
    <property type="match status" value="1"/>
</dbReference>
<dbReference type="Gene3D" id="3.30.860.10">
    <property type="entry name" value="30s Ribosomal Protein S19, Chain A"/>
    <property type="match status" value="1"/>
</dbReference>
<dbReference type="HAMAP" id="MF_00531">
    <property type="entry name" value="Ribosomal_uS19"/>
    <property type="match status" value="1"/>
</dbReference>
<dbReference type="InterPro" id="IPR002222">
    <property type="entry name" value="Ribosomal_uS19"/>
</dbReference>
<dbReference type="InterPro" id="IPR005732">
    <property type="entry name" value="Ribosomal_uS19_bac-type"/>
</dbReference>
<dbReference type="InterPro" id="IPR020934">
    <property type="entry name" value="Ribosomal_uS19_CS"/>
</dbReference>
<dbReference type="InterPro" id="IPR023575">
    <property type="entry name" value="Ribosomal_uS19_SF"/>
</dbReference>
<dbReference type="NCBIfam" id="TIGR01050">
    <property type="entry name" value="rpsS_bact"/>
    <property type="match status" value="1"/>
</dbReference>
<dbReference type="PANTHER" id="PTHR11880">
    <property type="entry name" value="RIBOSOMAL PROTEIN S19P FAMILY MEMBER"/>
    <property type="match status" value="1"/>
</dbReference>
<dbReference type="PANTHER" id="PTHR11880:SF8">
    <property type="entry name" value="SMALL RIBOSOMAL SUBUNIT PROTEIN US19M"/>
    <property type="match status" value="1"/>
</dbReference>
<dbReference type="Pfam" id="PF00203">
    <property type="entry name" value="Ribosomal_S19"/>
    <property type="match status" value="1"/>
</dbReference>
<dbReference type="PIRSF" id="PIRSF002144">
    <property type="entry name" value="Ribosomal_S19"/>
    <property type="match status" value="1"/>
</dbReference>
<dbReference type="PRINTS" id="PR00975">
    <property type="entry name" value="RIBOSOMALS19"/>
</dbReference>
<dbReference type="SUPFAM" id="SSF54570">
    <property type="entry name" value="Ribosomal protein S19"/>
    <property type="match status" value="1"/>
</dbReference>
<dbReference type="PROSITE" id="PS00323">
    <property type="entry name" value="RIBOSOMAL_S19"/>
    <property type="match status" value="1"/>
</dbReference>
<reference key="1">
    <citation type="submission" date="2008-08" db="EMBL/GenBank/DDBJ databases">
        <title>Complete sequence of Anaeromyxobacter sp. K.</title>
        <authorList>
            <consortium name="US DOE Joint Genome Institute"/>
            <person name="Lucas S."/>
            <person name="Copeland A."/>
            <person name="Lapidus A."/>
            <person name="Glavina del Rio T."/>
            <person name="Dalin E."/>
            <person name="Tice H."/>
            <person name="Bruce D."/>
            <person name="Goodwin L."/>
            <person name="Pitluck S."/>
            <person name="Saunders E."/>
            <person name="Brettin T."/>
            <person name="Detter J.C."/>
            <person name="Han C."/>
            <person name="Larimer F."/>
            <person name="Land M."/>
            <person name="Hauser L."/>
            <person name="Kyrpides N."/>
            <person name="Ovchinnikiva G."/>
            <person name="Beliaev A."/>
        </authorList>
    </citation>
    <scope>NUCLEOTIDE SEQUENCE [LARGE SCALE GENOMIC DNA]</scope>
    <source>
        <strain>K</strain>
    </source>
</reference>
<protein>
    <recommendedName>
        <fullName evidence="1">Small ribosomal subunit protein uS19</fullName>
    </recommendedName>
    <alternativeName>
        <fullName evidence="3">30S ribosomal protein S19</fullName>
    </alternativeName>
</protein>
<sequence>MARSIKKGPFADKHLTKKVEDANKGNKKSVIKTWSRRSTILPDFVGHTFAVHNGRKFVPVFVTENMVGHKLGEFAPTRTFHGHSAEKKAAAAPAPAKK</sequence>
<name>RS19_ANASK</name>
<comment type="function">
    <text evidence="1">Protein S19 forms a complex with S13 that binds strongly to the 16S ribosomal RNA.</text>
</comment>
<comment type="similarity">
    <text evidence="1">Belongs to the universal ribosomal protein uS19 family.</text>
</comment>
<keyword id="KW-0687">Ribonucleoprotein</keyword>
<keyword id="KW-0689">Ribosomal protein</keyword>
<keyword id="KW-0694">RNA-binding</keyword>
<keyword id="KW-0699">rRNA-binding</keyword>
<organism>
    <name type="scientific">Anaeromyxobacter sp. (strain K)</name>
    <dbReference type="NCBI Taxonomy" id="447217"/>
    <lineage>
        <taxon>Bacteria</taxon>
        <taxon>Pseudomonadati</taxon>
        <taxon>Myxococcota</taxon>
        <taxon>Myxococcia</taxon>
        <taxon>Myxococcales</taxon>
        <taxon>Cystobacterineae</taxon>
        <taxon>Anaeromyxobacteraceae</taxon>
        <taxon>Anaeromyxobacter</taxon>
    </lineage>
</organism>
<gene>
    <name evidence="1" type="primary">rpsS</name>
    <name type="ordered locus">AnaeK_1937</name>
</gene>